<accession>B1LHC3</accession>
<name>RL24_ECOSM</name>
<evidence type="ECO:0000255" key="1">
    <source>
        <dbReference type="HAMAP-Rule" id="MF_01326"/>
    </source>
</evidence>
<evidence type="ECO:0000305" key="2"/>
<protein>
    <recommendedName>
        <fullName evidence="1">Large ribosomal subunit protein uL24</fullName>
    </recommendedName>
    <alternativeName>
        <fullName evidence="2">50S ribosomal protein L24</fullName>
    </alternativeName>
</protein>
<comment type="function">
    <text evidence="1">One of two assembly initiator proteins, it binds directly to the 5'-end of the 23S rRNA, where it nucleates assembly of the 50S subunit.</text>
</comment>
<comment type="function">
    <text evidence="1">One of the proteins that surrounds the polypeptide exit tunnel on the outside of the subunit.</text>
</comment>
<comment type="subunit">
    <text evidence="1">Part of the 50S ribosomal subunit.</text>
</comment>
<comment type="similarity">
    <text evidence="1">Belongs to the universal ribosomal protein uL24 family.</text>
</comment>
<keyword id="KW-0687">Ribonucleoprotein</keyword>
<keyword id="KW-0689">Ribosomal protein</keyword>
<keyword id="KW-0694">RNA-binding</keyword>
<keyword id="KW-0699">rRNA-binding</keyword>
<feature type="chain" id="PRO_1000141996" description="Large ribosomal subunit protein uL24">
    <location>
        <begin position="1"/>
        <end position="104"/>
    </location>
</feature>
<sequence length="104" mass="11316">MAAKIRRDDEVIVLTGKDKGKRGKVKNVLSSGKVIVEGINLVKKHQKPVPALNQPGGIVEKEAAIQVSNVAIFNAATGKADRVGFRFEDGKKVRFFKSNSETIK</sequence>
<organism>
    <name type="scientific">Escherichia coli (strain SMS-3-5 / SECEC)</name>
    <dbReference type="NCBI Taxonomy" id="439855"/>
    <lineage>
        <taxon>Bacteria</taxon>
        <taxon>Pseudomonadati</taxon>
        <taxon>Pseudomonadota</taxon>
        <taxon>Gammaproteobacteria</taxon>
        <taxon>Enterobacterales</taxon>
        <taxon>Enterobacteriaceae</taxon>
        <taxon>Escherichia</taxon>
    </lineage>
</organism>
<proteinExistence type="inferred from homology"/>
<dbReference type="EMBL" id="CP000970">
    <property type="protein sequence ID" value="ACB18260.1"/>
    <property type="molecule type" value="Genomic_DNA"/>
</dbReference>
<dbReference type="RefSeq" id="WP_000729185.1">
    <property type="nucleotide sequence ID" value="NC_010498.1"/>
</dbReference>
<dbReference type="SMR" id="B1LHC3"/>
<dbReference type="GeneID" id="93778678"/>
<dbReference type="KEGG" id="ecm:EcSMS35_3604"/>
<dbReference type="HOGENOM" id="CLU_093315_2_2_6"/>
<dbReference type="Proteomes" id="UP000007011">
    <property type="component" value="Chromosome"/>
</dbReference>
<dbReference type="GO" id="GO:0005829">
    <property type="term" value="C:cytosol"/>
    <property type="evidence" value="ECO:0007669"/>
    <property type="project" value="UniProtKB-ARBA"/>
</dbReference>
<dbReference type="GO" id="GO:1990904">
    <property type="term" value="C:ribonucleoprotein complex"/>
    <property type="evidence" value="ECO:0007669"/>
    <property type="project" value="UniProtKB-KW"/>
</dbReference>
<dbReference type="GO" id="GO:0005840">
    <property type="term" value="C:ribosome"/>
    <property type="evidence" value="ECO:0007669"/>
    <property type="project" value="UniProtKB-KW"/>
</dbReference>
<dbReference type="GO" id="GO:0019843">
    <property type="term" value="F:rRNA binding"/>
    <property type="evidence" value="ECO:0007669"/>
    <property type="project" value="UniProtKB-UniRule"/>
</dbReference>
<dbReference type="GO" id="GO:0003735">
    <property type="term" value="F:structural constituent of ribosome"/>
    <property type="evidence" value="ECO:0007669"/>
    <property type="project" value="InterPro"/>
</dbReference>
<dbReference type="GO" id="GO:0006412">
    <property type="term" value="P:translation"/>
    <property type="evidence" value="ECO:0007669"/>
    <property type="project" value="UniProtKB-UniRule"/>
</dbReference>
<dbReference type="CDD" id="cd06089">
    <property type="entry name" value="KOW_RPL26"/>
    <property type="match status" value="1"/>
</dbReference>
<dbReference type="FunFam" id="2.30.30.30:FF:000004">
    <property type="entry name" value="50S ribosomal protein L24"/>
    <property type="match status" value="1"/>
</dbReference>
<dbReference type="Gene3D" id="2.30.30.30">
    <property type="match status" value="1"/>
</dbReference>
<dbReference type="HAMAP" id="MF_01326_B">
    <property type="entry name" value="Ribosomal_uL24_B"/>
    <property type="match status" value="1"/>
</dbReference>
<dbReference type="InterPro" id="IPR005824">
    <property type="entry name" value="KOW"/>
</dbReference>
<dbReference type="InterPro" id="IPR014722">
    <property type="entry name" value="Rib_uL2_dom2"/>
</dbReference>
<dbReference type="InterPro" id="IPR003256">
    <property type="entry name" value="Ribosomal_uL24"/>
</dbReference>
<dbReference type="InterPro" id="IPR005825">
    <property type="entry name" value="Ribosomal_uL24_CS"/>
</dbReference>
<dbReference type="InterPro" id="IPR041988">
    <property type="entry name" value="Ribosomal_uL24_KOW"/>
</dbReference>
<dbReference type="InterPro" id="IPR008991">
    <property type="entry name" value="Translation_prot_SH3-like_sf"/>
</dbReference>
<dbReference type="NCBIfam" id="TIGR01079">
    <property type="entry name" value="rplX_bact"/>
    <property type="match status" value="1"/>
</dbReference>
<dbReference type="PANTHER" id="PTHR12903">
    <property type="entry name" value="MITOCHONDRIAL RIBOSOMAL PROTEIN L24"/>
    <property type="match status" value="1"/>
</dbReference>
<dbReference type="Pfam" id="PF00467">
    <property type="entry name" value="KOW"/>
    <property type="match status" value="1"/>
</dbReference>
<dbReference type="Pfam" id="PF17136">
    <property type="entry name" value="ribosomal_L24"/>
    <property type="match status" value="1"/>
</dbReference>
<dbReference type="SMART" id="SM00739">
    <property type="entry name" value="KOW"/>
    <property type="match status" value="1"/>
</dbReference>
<dbReference type="SUPFAM" id="SSF50104">
    <property type="entry name" value="Translation proteins SH3-like domain"/>
    <property type="match status" value="1"/>
</dbReference>
<dbReference type="PROSITE" id="PS01108">
    <property type="entry name" value="RIBOSOMAL_L24"/>
    <property type="match status" value="1"/>
</dbReference>
<gene>
    <name evidence="1" type="primary">rplX</name>
    <name type="ordered locus">EcSMS35_3604</name>
</gene>
<reference key="1">
    <citation type="journal article" date="2008" name="J. Bacteriol.">
        <title>Insights into the environmental resistance gene pool from the genome sequence of the multidrug-resistant environmental isolate Escherichia coli SMS-3-5.</title>
        <authorList>
            <person name="Fricke W.F."/>
            <person name="Wright M.S."/>
            <person name="Lindell A.H."/>
            <person name="Harkins D.M."/>
            <person name="Baker-Austin C."/>
            <person name="Ravel J."/>
            <person name="Stepanauskas R."/>
        </authorList>
    </citation>
    <scope>NUCLEOTIDE SEQUENCE [LARGE SCALE GENOMIC DNA]</scope>
    <source>
        <strain>SMS-3-5 / SECEC</strain>
    </source>
</reference>